<evidence type="ECO:0000255" key="1">
    <source>
        <dbReference type="HAMAP-Rule" id="MF_00528"/>
    </source>
</evidence>
<feature type="chain" id="PRO_1000146275" description="dTTP/UTP pyrophosphatase">
    <location>
        <begin position="1"/>
        <end position="190"/>
    </location>
</feature>
<feature type="active site" description="Proton acceptor" evidence="1">
    <location>
        <position position="68"/>
    </location>
</feature>
<feature type="site" description="Important for substrate specificity" evidence="1">
    <location>
        <position position="10"/>
    </location>
</feature>
<feature type="site" description="Important for substrate specificity" evidence="1">
    <location>
        <position position="69"/>
    </location>
</feature>
<feature type="site" description="Important for substrate specificity" evidence="1">
    <location>
        <position position="151"/>
    </location>
</feature>
<dbReference type="EC" id="3.6.1.9" evidence="1"/>
<dbReference type="EMBL" id="CP000896">
    <property type="protein sequence ID" value="ABX81974.1"/>
    <property type="molecule type" value="Genomic_DNA"/>
</dbReference>
<dbReference type="RefSeq" id="WP_012243305.1">
    <property type="nucleotide sequence ID" value="NC_010163.1"/>
</dbReference>
<dbReference type="SMR" id="A9NE14"/>
<dbReference type="STRING" id="441768.ACL_1383"/>
<dbReference type="GeneID" id="41339512"/>
<dbReference type="KEGG" id="acl:ACL_1383"/>
<dbReference type="eggNOG" id="COG0424">
    <property type="taxonomic scope" value="Bacteria"/>
</dbReference>
<dbReference type="HOGENOM" id="CLU_040416_0_0_14"/>
<dbReference type="OrthoDB" id="9807767at2"/>
<dbReference type="Proteomes" id="UP000008558">
    <property type="component" value="Chromosome"/>
</dbReference>
<dbReference type="GO" id="GO:0005737">
    <property type="term" value="C:cytoplasm"/>
    <property type="evidence" value="ECO:0007669"/>
    <property type="project" value="UniProtKB-SubCell"/>
</dbReference>
<dbReference type="GO" id="GO:0036218">
    <property type="term" value="F:dTTP diphosphatase activity"/>
    <property type="evidence" value="ECO:0007669"/>
    <property type="project" value="RHEA"/>
</dbReference>
<dbReference type="GO" id="GO:0036221">
    <property type="term" value="F:UTP diphosphatase activity"/>
    <property type="evidence" value="ECO:0007669"/>
    <property type="project" value="RHEA"/>
</dbReference>
<dbReference type="GO" id="GO:0009117">
    <property type="term" value="P:nucleotide metabolic process"/>
    <property type="evidence" value="ECO:0007669"/>
    <property type="project" value="UniProtKB-KW"/>
</dbReference>
<dbReference type="CDD" id="cd00555">
    <property type="entry name" value="Maf"/>
    <property type="match status" value="1"/>
</dbReference>
<dbReference type="Gene3D" id="3.90.950.10">
    <property type="match status" value="1"/>
</dbReference>
<dbReference type="HAMAP" id="MF_00528">
    <property type="entry name" value="Maf"/>
    <property type="match status" value="1"/>
</dbReference>
<dbReference type="InterPro" id="IPR029001">
    <property type="entry name" value="ITPase-like_fam"/>
</dbReference>
<dbReference type="InterPro" id="IPR003697">
    <property type="entry name" value="Maf-like"/>
</dbReference>
<dbReference type="NCBIfam" id="TIGR00172">
    <property type="entry name" value="maf"/>
    <property type="match status" value="1"/>
</dbReference>
<dbReference type="PANTHER" id="PTHR43213">
    <property type="entry name" value="BIFUNCTIONAL DTTP/UTP PYROPHOSPHATASE/METHYLTRANSFERASE PROTEIN-RELATED"/>
    <property type="match status" value="1"/>
</dbReference>
<dbReference type="PANTHER" id="PTHR43213:SF5">
    <property type="entry name" value="BIFUNCTIONAL DTTP_UTP PYROPHOSPHATASE_METHYLTRANSFERASE PROTEIN-RELATED"/>
    <property type="match status" value="1"/>
</dbReference>
<dbReference type="Pfam" id="PF02545">
    <property type="entry name" value="Maf"/>
    <property type="match status" value="1"/>
</dbReference>
<dbReference type="PIRSF" id="PIRSF006305">
    <property type="entry name" value="Maf"/>
    <property type="match status" value="1"/>
</dbReference>
<dbReference type="SUPFAM" id="SSF52972">
    <property type="entry name" value="ITPase-like"/>
    <property type="match status" value="1"/>
</dbReference>
<protein>
    <recommendedName>
        <fullName evidence="1">dTTP/UTP pyrophosphatase</fullName>
        <shortName evidence="1">dTTPase/UTPase</shortName>
        <ecNumber evidence="1">3.6.1.9</ecNumber>
    </recommendedName>
    <alternativeName>
        <fullName evidence="1">Nucleoside triphosphate pyrophosphatase</fullName>
    </alternativeName>
    <alternativeName>
        <fullName evidence="1">Nucleotide pyrophosphatase</fullName>
        <shortName evidence="1">Nucleotide PPase</shortName>
    </alternativeName>
</protein>
<organism>
    <name type="scientific">Acholeplasma laidlawii (strain PG-8A)</name>
    <dbReference type="NCBI Taxonomy" id="441768"/>
    <lineage>
        <taxon>Bacteria</taxon>
        <taxon>Bacillati</taxon>
        <taxon>Mycoplasmatota</taxon>
        <taxon>Mollicutes</taxon>
        <taxon>Acholeplasmatales</taxon>
        <taxon>Acholeplasmataceae</taxon>
        <taxon>Acholeplasma</taxon>
    </lineage>
</organism>
<keyword id="KW-0963">Cytoplasm</keyword>
<keyword id="KW-0378">Hydrolase</keyword>
<keyword id="KW-0546">Nucleotide metabolism</keyword>
<keyword id="KW-1185">Reference proteome</keyword>
<reference key="1">
    <citation type="journal article" date="2011" name="J. Bacteriol.">
        <title>Complete genome and proteome of Acholeplasma laidlawii.</title>
        <authorList>
            <person name="Lazarev V.N."/>
            <person name="Levitskii S.A."/>
            <person name="Basovskii Y.I."/>
            <person name="Chukin M.M."/>
            <person name="Akopian T.A."/>
            <person name="Vereshchagin V.V."/>
            <person name="Kostrjukova E.S."/>
            <person name="Kovaleva G.Y."/>
            <person name="Kazanov M.D."/>
            <person name="Malko D.B."/>
            <person name="Vitreschak A.G."/>
            <person name="Sernova N.V."/>
            <person name="Gelfand M.S."/>
            <person name="Demina I.A."/>
            <person name="Serebryakova M.V."/>
            <person name="Galyamina M.A."/>
            <person name="Vtyurin N.N."/>
            <person name="Rogov S.I."/>
            <person name="Alexeev D.G."/>
            <person name="Ladygina V.G."/>
            <person name="Govorun V.M."/>
        </authorList>
    </citation>
    <scope>NUCLEOTIDE SEQUENCE [LARGE SCALE GENOMIC DNA]</scope>
    <source>
        <strain>PG-8A</strain>
    </source>
</reference>
<accession>A9NE14</accession>
<comment type="function">
    <text evidence="1">Nucleoside triphosphate pyrophosphatase that hydrolyzes dTTP and UTP. May have a dual role in cell division arrest and in preventing the incorporation of modified nucleotides into cellular nucleic acids.</text>
</comment>
<comment type="catalytic activity">
    <reaction evidence="1">
        <text>dTTP + H2O = dTMP + diphosphate + H(+)</text>
        <dbReference type="Rhea" id="RHEA:28534"/>
        <dbReference type="ChEBI" id="CHEBI:15377"/>
        <dbReference type="ChEBI" id="CHEBI:15378"/>
        <dbReference type="ChEBI" id="CHEBI:33019"/>
        <dbReference type="ChEBI" id="CHEBI:37568"/>
        <dbReference type="ChEBI" id="CHEBI:63528"/>
        <dbReference type="EC" id="3.6.1.9"/>
    </reaction>
</comment>
<comment type="catalytic activity">
    <reaction evidence="1">
        <text>UTP + H2O = UMP + diphosphate + H(+)</text>
        <dbReference type="Rhea" id="RHEA:29395"/>
        <dbReference type="ChEBI" id="CHEBI:15377"/>
        <dbReference type="ChEBI" id="CHEBI:15378"/>
        <dbReference type="ChEBI" id="CHEBI:33019"/>
        <dbReference type="ChEBI" id="CHEBI:46398"/>
        <dbReference type="ChEBI" id="CHEBI:57865"/>
        <dbReference type="EC" id="3.6.1.9"/>
    </reaction>
</comment>
<comment type="cofactor">
    <cofactor evidence="1">
        <name>a divalent metal cation</name>
        <dbReference type="ChEBI" id="CHEBI:60240"/>
    </cofactor>
</comment>
<comment type="subcellular location">
    <subcellularLocation>
        <location evidence="1">Cytoplasm</location>
    </subcellularLocation>
</comment>
<comment type="similarity">
    <text evidence="1">Belongs to the Maf family. YhdE subfamily.</text>
</comment>
<proteinExistence type="inferred from homology"/>
<name>NTPPA_ACHLI</name>
<gene>
    <name type="ordered locus">ACL_1383</name>
</gene>
<sequence length="190" mass="21115">MLILGSGSARRKELLESASIDFLLVPSDYNESQVAFEGDTLKYVETIAENKAKALLHKYPLDVILTADTVVEVDGEILGKPKDIEDAQKMLQLLNDKTHHVYTGVCIVSKDKKEVFVESASVTFNKLSTLDIESYIQTKEPMDKAGAYAIQGIGAKLIKQYDGDFHTIMGLPLKLVLEKLKDFNIVPKLK</sequence>